<keyword id="KW-0051">Antiviral defense</keyword>
<keyword id="KW-0255">Endonuclease</keyword>
<keyword id="KW-0378">Hydrolase</keyword>
<keyword id="KW-0460">Magnesium</keyword>
<keyword id="KW-0479">Metal-binding</keyword>
<keyword id="KW-0540">Nuclease</keyword>
<keyword id="KW-1185">Reference proteome</keyword>
<evidence type="ECO:0000250" key="1"/>
<evidence type="ECO:0000255" key="2"/>
<evidence type="ECO:0000269" key="3">
    <source>
    </source>
</evidence>
<evidence type="ECO:0000305" key="4"/>
<dbReference type="EC" id="3.1.-.-"/>
<dbReference type="EMBL" id="AE000512">
    <property type="protein sequence ID" value="AAD36859.1"/>
    <property type="molecule type" value="Genomic_DNA"/>
</dbReference>
<dbReference type="PIR" id="A72210">
    <property type="entry name" value="A72210"/>
</dbReference>
<dbReference type="RefSeq" id="NP_229593.1">
    <property type="nucleotide sequence ID" value="NC_000853.1"/>
</dbReference>
<dbReference type="RefSeq" id="WP_004082343.1">
    <property type="nucleotide sequence ID" value="NZ_CP011107.1"/>
</dbReference>
<dbReference type="SMR" id="Q9X2B6"/>
<dbReference type="STRING" id="243274.TM_1796"/>
<dbReference type="PaxDb" id="243274-THEMA_05210"/>
<dbReference type="EnsemblBacteria" id="AAD36859">
    <property type="protein sequence ID" value="AAD36859"/>
    <property type="gene ID" value="TM_1796"/>
</dbReference>
<dbReference type="KEGG" id="tma:TM1796"/>
<dbReference type="KEGG" id="tmi:THEMA_05210"/>
<dbReference type="KEGG" id="tmm:Tmari_1806"/>
<dbReference type="KEGG" id="tmw:THMA_1842"/>
<dbReference type="eggNOG" id="COG1343">
    <property type="taxonomic scope" value="Bacteria"/>
</dbReference>
<dbReference type="InParanoid" id="Q9X2B6"/>
<dbReference type="OrthoDB" id="279819at2"/>
<dbReference type="Proteomes" id="UP000008183">
    <property type="component" value="Chromosome"/>
</dbReference>
<dbReference type="GO" id="GO:0046872">
    <property type="term" value="F:metal ion binding"/>
    <property type="evidence" value="ECO:0007669"/>
    <property type="project" value="UniProtKB-UniRule"/>
</dbReference>
<dbReference type="GO" id="GO:0004521">
    <property type="term" value="F:RNA endonuclease activity"/>
    <property type="evidence" value="ECO:0007669"/>
    <property type="project" value="InterPro"/>
</dbReference>
<dbReference type="GO" id="GO:0051607">
    <property type="term" value="P:defense response to virus"/>
    <property type="evidence" value="ECO:0007669"/>
    <property type="project" value="UniProtKB-UniRule"/>
</dbReference>
<dbReference type="GO" id="GO:0043571">
    <property type="term" value="P:maintenance of CRISPR repeat elements"/>
    <property type="evidence" value="ECO:0007669"/>
    <property type="project" value="UniProtKB-UniRule"/>
</dbReference>
<dbReference type="CDD" id="cd09725">
    <property type="entry name" value="Cas2_I_II_III"/>
    <property type="match status" value="1"/>
</dbReference>
<dbReference type="Gene3D" id="3.30.70.240">
    <property type="match status" value="1"/>
</dbReference>
<dbReference type="HAMAP" id="MF_01471">
    <property type="entry name" value="Cas2"/>
    <property type="match status" value="1"/>
</dbReference>
<dbReference type="InterPro" id="IPR021127">
    <property type="entry name" value="CRISPR_associated_Cas2"/>
</dbReference>
<dbReference type="InterPro" id="IPR019199">
    <property type="entry name" value="Virulence_VapD/CRISPR_Cas2"/>
</dbReference>
<dbReference type="NCBIfam" id="TIGR01573">
    <property type="entry name" value="cas2"/>
    <property type="match status" value="1"/>
</dbReference>
<dbReference type="PANTHER" id="PTHR34405">
    <property type="entry name" value="CRISPR-ASSOCIATED ENDORIBONUCLEASE CAS2"/>
    <property type="match status" value="1"/>
</dbReference>
<dbReference type="PANTHER" id="PTHR34405:SF1">
    <property type="entry name" value="CRISPR-ASSOCIATED ENDORIBONUCLEASE CAS2"/>
    <property type="match status" value="1"/>
</dbReference>
<dbReference type="Pfam" id="PF09827">
    <property type="entry name" value="CRISPR_Cas2"/>
    <property type="match status" value="1"/>
</dbReference>
<dbReference type="SUPFAM" id="SSF143430">
    <property type="entry name" value="TTP0101/SSO1404-like"/>
    <property type="match status" value="1"/>
</dbReference>
<proteinExistence type="evidence at protein level"/>
<organism>
    <name type="scientific">Thermotoga maritima (strain ATCC 43589 / DSM 3109 / JCM 10099 / NBRC 100826 / MSB8)</name>
    <dbReference type="NCBI Taxonomy" id="243274"/>
    <lineage>
        <taxon>Bacteria</taxon>
        <taxon>Thermotogati</taxon>
        <taxon>Thermotogota</taxon>
        <taxon>Thermotogae</taxon>
        <taxon>Thermotogales</taxon>
        <taxon>Thermotogaceae</taxon>
        <taxon>Thermotoga</taxon>
    </lineage>
</organism>
<feature type="chain" id="PRO_0000416947" description="CRISPR-associated endoribonuclease Cas2">
    <location>
        <begin position="1"/>
        <end position="87"/>
    </location>
</feature>
<feature type="binding site" evidence="2">
    <location>
        <position position="8"/>
    </location>
    <ligand>
        <name>Mg(2+)</name>
        <dbReference type="ChEBI" id="CHEBI:18420"/>
        <note>catalytic</note>
    </ligand>
</feature>
<gene>
    <name type="primary">cas2</name>
    <name type="ordered locus">TM_1796</name>
</gene>
<name>CAS2_THEMA</name>
<comment type="function">
    <text evidence="1 3">CRISPR (clustered regularly interspaced short palindromic repeat), is an adaptive immune system that provides protection against mobile genetic elements (viruses, transposable elements and conjugative plasmids). CRISPR clusters contain sequences complementary to antecedent mobile elements and target invading nucleic acids. CRISPR clusters are transcribed and processed into CRISPR RNA (crRNA). Involved in the integration of spacer DNA into the CRISPR cassette (By similarity). Functions as a ssRNA-specific endoribonuclease.</text>
</comment>
<comment type="cofactor">
    <cofactor evidence="1">
        <name>Mg(2+)</name>
        <dbReference type="ChEBI" id="CHEBI:18420"/>
    </cofactor>
</comment>
<comment type="subunit">
    <text evidence="1">Homodimer, forms a heterotetramer with a Cas1 homodimer.</text>
</comment>
<comment type="similarity">
    <text evidence="4">Belongs to the CRISPR-associated endoribonuclease Cas2 protein family.</text>
</comment>
<protein>
    <recommendedName>
        <fullName>CRISPR-associated endoribonuclease Cas2</fullName>
        <ecNumber>3.1.-.-</ecNumber>
    </recommendedName>
</protein>
<accession>Q9X2B6</accession>
<sequence length="87" mass="10238">MYVIMVYDVNEKRVAKILKIARKYLKWVQNSVLEGELSPGKYEKLKLEVSRLIDEKEDSVRFYVMDSQKVFNLETLGVEKGEDGFIF</sequence>
<reference key="1">
    <citation type="journal article" date="1999" name="Nature">
        <title>Evidence for lateral gene transfer between Archaea and Bacteria from genome sequence of Thermotoga maritima.</title>
        <authorList>
            <person name="Nelson K.E."/>
            <person name="Clayton R.A."/>
            <person name="Gill S.R."/>
            <person name="Gwinn M.L."/>
            <person name="Dodson R.J."/>
            <person name="Haft D.H."/>
            <person name="Hickey E.K."/>
            <person name="Peterson J.D."/>
            <person name="Nelson W.C."/>
            <person name="Ketchum K.A."/>
            <person name="McDonald L.A."/>
            <person name="Utterback T.R."/>
            <person name="Malek J.A."/>
            <person name="Linher K.D."/>
            <person name="Garrett M.M."/>
            <person name="Stewart A.M."/>
            <person name="Cotton M.D."/>
            <person name="Pratt M.S."/>
            <person name="Phillips C.A."/>
            <person name="Richardson D.L."/>
            <person name="Heidelberg J.F."/>
            <person name="Sutton G.G."/>
            <person name="Fleischmann R.D."/>
            <person name="Eisen J.A."/>
            <person name="White O."/>
            <person name="Salzberg S.L."/>
            <person name="Smith H.O."/>
            <person name="Venter J.C."/>
            <person name="Fraser C.M."/>
        </authorList>
    </citation>
    <scope>NUCLEOTIDE SEQUENCE [LARGE SCALE GENOMIC DNA]</scope>
    <source>
        <strain>ATCC 43589 / DSM 3109 / JCM 10099 / NBRC 100826 / MSB8</strain>
    </source>
</reference>
<reference key="2">
    <citation type="journal article" date="2008" name="J. Biol. Chem.">
        <title>A novel family of sequence-specific endoribonucleases associated with the clustered regularly interspaced short palindromic repeats.</title>
        <authorList>
            <person name="Beloglazova N."/>
            <person name="Brown G."/>
            <person name="Zimmerman M.D."/>
            <person name="Proudfoot M."/>
            <person name="Makarova K.S."/>
            <person name="Kudritska M."/>
            <person name="Kochinyan S."/>
            <person name="Wang S."/>
            <person name="Chruszcz M."/>
            <person name="Minor W."/>
            <person name="Koonin E.V."/>
            <person name="Edwards A.M."/>
            <person name="Savchenko A."/>
            <person name="Yakunin A.F."/>
        </authorList>
    </citation>
    <scope>FUNCTION AS A SSRNA-SPECIFIC ENDORIBONUCLEASE</scope>
    <source>
        <strain>ATCC 43589 / DSM 3109 / JCM 10099 / NBRC 100826 / MSB8</strain>
    </source>
</reference>